<feature type="chain" id="PRO_0000195282" description="Glucose-1-phosphate adenylyltransferase">
    <location>
        <begin position="1"/>
        <end position="379"/>
    </location>
</feature>
<feature type="binding site" evidence="1">
    <location>
        <position position="99"/>
    </location>
    <ligand>
        <name>alpha-D-glucose 1-phosphate</name>
        <dbReference type="ChEBI" id="CHEBI:58601"/>
    </ligand>
</feature>
<feature type="binding site" evidence="1">
    <location>
        <position position="164"/>
    </location>
    <ligand>
        <name>alpha-D-glucose 1-phosphate</name>
        <dbReference type="ChEBI" id="CHEBI:58601"/>
    </ligand>
</feature>
<feature type="binding site" evidence="1">
    <location>
        <begin position="179"/>
        <end position="180"/>
    </location>
    <ligand>
        <name>alpha-D-glucose 1-phosphate</name>
        <dbReference type="ChEBI" id="CHEBI:58601"/>
    </ligand>
</feature>
<feature type="binding site" evidence="1">
    <location>
        <position position="190"/>
    </location>
    <ligand>
        <name>alpha-D-glucose 1-phosphate</name>
        <dbReference type="ChEBI" id="CHEBI:58601"/>
    </ligand>
</feature>
<evidence type="ECO:0000255" key="1">
    <source>
        <dbReference type="HAMAP-Rule" id="MF_00624"/>
    </source>
</evidence>
<keyword id="KW-0067">ATP-binding</keyword>
<keyword id="KW-0119">Carbohydrate metabolism</keyword>
<keyword id="KW-0320">Glycogen biosynthesis</keyword>
<keyword id="KW-0321">Glycogen metabolism</keyword>
<keyword id="KW-0547">Nucleotide-binding</keyword>
<keyword id="KW-0548">Nucleotidyltransferase</keyword>
<keyword id="KW-1185">Reference proteome</keyword>
<keyword id="KW-0808">Transferase</keyword>
<sequence length="379" mass="42379">MKEQCVAMLLAGGKGSRLNALTKNLAKPAVPFGGKYRIIDFALSNCANSGIHHVGVLTQYQPLLLNSYIGIGEPWDLDRNDGGVSILSPYAEASEVKWYKGTASAIYENRHFLKELQPEHVLILSGDHIYKMDYGKMLEYHAEKQADATIAVIEVSWAEAGRFGILHTNDKMEITSFEEKPKYPKSNLASMGVYVFKWSVLEDALERDEKNSASSHDFGKDVIPALLEENKRLNAYPFKGYWKDVGTVRSLWEANMDLLGDHPPLDLFERNWRIYSVSPNLPPQFVADLAEIKESLVSEGCTVYGSVTRSVIFQRVAIGRHSAIKRSVVMHDVSIGEYVEIENAIVSAGIRIPDGFCAKPEDGEVLLITEEYVKKHKVV</sequence>
<accession>Q65FS5</accession>
<accession>Q62R82</accession>
<name>GLGC_BACLD</name>
<comment type="function">
    <text evidence="1">Involved in the biosynthesis of ADP-glucose, a building block required for the elongation reactions to produce glycogen. Catalyzes the reaction between ATP and alpha-D-glucose 1-phosphate (G1P) to produce pyrophosphate and ADP-Glc.</text>
</comment>
<comment type="catalytic activity">
    <reaction evidence="1">
        <text>alpha-D-glucose 1-phosphate + ATP + H(+) = ADP-alpha-D-glucose + diphosphate</text>
        <dbReference type="Rhea" id="RHEA:12120"/>
        <dbReference type="ChEBI" id="CHEBI:15378"/>
        <dbReference type="ChEBI" id="CHEBI:30616"/>
        <dbReference type="ChEBI" id="CHEBI:33019"/>
        <dbReference type="ChEBI" id="CHEBI:57498"/>
        <dbReference type="ChEBI" id="CHEBI:58601"/>
        <dbReference type="EC" id="2.7.7.27"/>
    </reaction>
</comment>
<comment type="pathway">
    <text evidence="1">Glycan biosynthesis; glycogen biosynthesis.</text>
</comment>
<comment type="subunit">
    <text evidence="1">Homotetramer.</text>
</comment>
<comment type="similarity">
    <text evidence="1">Belongs to the bacterial/plant glucose-1-phosphate adenylyltransferase family.</text>
</comment>
<organism>
    <name type="scientific">Bacillus licheniformis (strain ATCC 14580 / DSM 13 / JCM 2505 / CCUG 7422 / NBRC 12200 / NCIMB 9375 / NCTC 10341 / NRRL NRS-1264 / Gibson 46)</name>
    <dbReference type="NCBI Taxonomy" id="279010"/>
    <lineage>
        <taxon>Bacteria</taxon>
        <taxon>Bacillati</taxon>
        <taxon>Bacillota</taxon>
        <taxon>Bacilli</taxon>
        <taxon>Bacillales</taxon>
        <taxon>Bacillaceae</taxon>
        <taxon>Bacillus</taxon>
    </lineage>
</organism>
<dbReference type="EC" id="2.7.7.27" evidence="1"/>
<dbReference type="EMBL" id="AE017333">
    <property type="protein sequence ID" value="AAU42089.1"/>
    <property type="molecule type" value="Genomic_DNA"/>
</dbReference>
<dbReference type="EMBL" id="CP000002">
    <property type="protein sequence ID" value="AAU24728.1"/>
    <property type="molecule type" value="Genomic_DNA"/>
</dbReference>
<dbReference type="RefSeq" id="WP_003184656.1">
    <property type="nucleotide sequence ID" value="NC_006322.1"/>
</dbReference>
<dbReference type="SMR" id="Q65FS5"/>
<dbReference type="STRING" id="279010.BL01418"/>
<dbReference type="KEGG" id="bld:BLi03229"/>
<dbReference type="KEGG" id="bli:BL01418"/>
<dbReference type="PATRIC" id="fig|279010.13.peg.3302"/>
<dbReference type="eggNOG" id="COG0448">
    <property type="taxonomic scope" value="Bacteria"/>
</dbReference>
<dbReference type="HOGENOM" id="CLU_029499_14_0_9"/>
<dbReference type="UniPathway" id="UPA00164"/>
<dbReference type="Proteomes" id="UP000000606">
    <property type="component" value="Chromosome"/>
</dbReference>
<dbReference type="Bgee" id="BL01418">
    <property type="expression patterns" value="Expressed in testis and 4 other cell types or tissues"/>
</dbReference>
<dbReference type="GO" id="GO:0005524">
    <property type="term" value="F:ATP binding"/>
    <property type="evidence" value="ECO:0007669"/>
    <property type="project" value="UniProtKB-KW"/>
</dbReference>
<dbReference type="GO" id="GO:0008878">
    <property type="term" value="F:glucose-1-phosphate adenylyltransferase activity"/>
    <property type="evidence" value="ECO:0007669"/>
    <property type="project" value="UniProtKB-UniRule"/>
</dbReference>
<dbReference type="GO" id="GO:0005978">
    <property type="term" value="P:glycogen biosynthetic process"/>
    <property type="evidence" value="ECO:0007669"/>
    <property type="project" value="UniProtKB-UniRule"/>
</dbReference>
<dbReference type="CDD" id="cd02508">
    <property type="entry name" value="ADP_Glucose_PP"/>
    <property type="match status" value="1"/>
</dbReference>
<dbReference type="CDD" id="cd04651">
    <property type="entry name" value="LbH_G1P_AT_C"/>
    <property type="match status" value="1"/>
</dbReference>
<dbReference type="Gene3D" id="2.160.10.10">
    <property type="entry name" value="Hexapeptide repeat proteins"/>
    <property type="match status" value="1"/>
</dbReference>
<dbReference type="Gene3D" id="3.90.550.10">
    <property type="entry name" value="Spore Coat Polysaccharide Biosynthesis Protein SpsA, Chain A"/>
    <property type="match status" value="1"/>
</dbReference>
<dbReference type="HAMAP" id="MF_00624">
    <property type="entry name" value="GlgC"/>
    <property type="match status" value="1"/>
</dbReference>
<dbReference type="InterPro" id="IPR011831">
    <property type="entry name" value="ADP-Glc_PPase"/>
</dbReference>
<dbReference type="InterPro" id="IPR005836">
    <property type="entry name" value="ADP_Glu_pyroP_CS"/>
</dbReference>
<dbReference type="InterPro" id="IPR023049">
    <property type="entry name" value="GlgC_bac"/>
</dbReference>
<dbReference type="InterPro" id="IPR056818">
    <property type="entry name" value="GlmU/GlgC-like_hexapep"/>
</dbReference>
<dbReference type="InterPro" id="IPR005835">
    <property type="entry name" value="NTP_transferase_dom"/>
</dbReference>
<dbReference type="InterPro" id="IPR029044">
    <property type="entry name" value="Nucleotide-diphossugar_trans"/>
</dbReference>
<dbReference type="InterPro" id="IPR011004">
    <property type="entry name" value="Trimer_LpxA-like_sf"/>
</dbReference>
<dbReference type="NCBIfam" id="TIGR02091">
    <property type="entry name" value="glgC"/>
    <property type="match status" value="1"/>
</dbReference>
<dbReference type="NCBIfam" id="NF003670">
    <property type="entry name" value="PRK05293.1"/>
    <property type="match status" value="1"/>
</dbReference>
<dbReference type="PANTHER" id="PTHR43523:SF2">
    <property type="entry name" value="GLUCOSE-1-PHOSPHATE ADENYLYLTRANSFERASE"/>
    <property type="match status" value="1"/>
</dbReference>
<dbReference type="PANTHER" id="PTHR43523">
    <property type="entry name" value="GLUCOSE-1-PHOSPHATE ADENYLYLTRANSFERASE-RELATED"/>
    <property type="match status" value="1"/>
</dbReference>
<dbReference type="Pfam" id="PF24894">
    <property type="entry name" value="Hexapep_GlmU"/>
    <property type="match status" value="1"/>
</dbReference>
<dbReference type="Pfam" id="PF00483">
    <property type="entry name" value="NTP_transferase"/>
    <property type="match status" value="1"/>
</dbReference>
<dbReference type="SUPFAM" id="SSF53448">
    <property type="entry name" value="Nucleotide-diphospho-sugar transferases"/>
    <property type="match status" value="1"/>
</dbReference>
<dbReference type="SUPFAM" id="SSF51161">
    <property type="entry name" value="Trimeric LpxA-like enzymes"/>
    <property type="match status" value="1"/>
</dbReference>
<dbReference type="PROSITE" id="PS00808">
    <property type="entry name" value="ADP_GLC_PYROPHOSPH_1"/>
    <property type="match status" value="1"/>
</dbReference>
<dbReference type="PROSITE" id="PS00809">
    <property type="entry name" value="ADP_GLC_PYROPHOSPH_2"/>
    <property type="match status" value="1"/>
</dbReference>
<dbReference type="PROSITE" id="PS00810">
    <property type="entry name" value="ADP_GLC_PYROPHOSPH_3"/>
    <property type="match status" value="1"/>
</dbReference>
<protein>
    <recommendedName>
        <fullName evidence="1">Glucose-1-phosphate adenylyltransferase</fullName>
        <ecNumber evidence="1">2.7.7.27</ecNumber>
    </recommendedName>
    <alternativeName>
        <fullName evidence="1">ADP-glucose pyrophosphorylase</fullName>
        <shortName evidence="1">ADPGlc PPase</shortName>
    </alternativeName>
    <alternativeName>
        <fullName evidence="1">ADP-glucose synthase</fullName>
    </alternativeName>
</protein>
<reference key="1">
    <citation type="journal article" date="2004" name="J. Mol. Microbiol. Biotechnol.">
        <title>The complete genome sequence of Bacillus licheniformis DSM13, an organism with great industrial potential.</title>
        <authorList>
            <person name="Veith B."/>
            <person name="Herzberg C."/>
            <person name="Steckel S."/>
            <person name="Feesche J."/>
            <person name="Maurer K.H."/>
            <person name="Ehrenreich P."/>
            <person name="Baeumer S."/>
            <person name="Henne A."/>
            <person name="Liesegang H."/>
            <person name="Merkl R."/>
            <person name="Ehrenreich A."/>
            <person name="Gottschalk G."/>
        </authorList>
    </citation>
    <scope>NUCLEOTIDE SEQUENCE [LARGE SCALE GENOMIC DNA]</scope>
    <source>
        <strain>ATCC 14580 / DSM 13 / JCM 2505 / CCUG 7422 / NBRC 12200 / NCIMB 9375 / NCTC 10341 / NRRL NRS-1264 / Gibson 46</strain>
    </source>
</reference>
<reference key="2">
    <citation type="journal article" date="2004" name="Genome Biol.">
        <title>Complete genome sequence of the industrial bacterium Bacillus licheniformis and comparisons with closely related Bacillus species.</title>
        <authorList>
            <person name="Rey M.W."/>
            <person name="Ramaiya P."/>
            <person name="Nelson B.A."/>
            <person name="Brody-Karpin S.D."/>
            <person name="Zaretsky E.J."/>
            <person name="Tang M."/>
            <person name="Lopez de Leon A."/>
            <person name="Xiang H."/>
            <person name="Gusti V."/>
            <person name="Clausen I.G."/>
            <person name="Olsen P.B."/>
            <person name="Rasmussen M.D."/>
            <person name="Andersen J.T."/>
            <person name="Joergensen P.L."/>
            <person name="Larsen T.S."/>
            <person name="Sorokin A."/>
            <person name="Bolotin A."/>
            <person name="Lapidus A."/>
            <person name="Galleron N."/>
            <person name="Ehrlich S.D."/>
            <person name="Berka R.M."/>
        </authorList>
    </citation>
    <scope>NUCLEOTIDE SEQUENCE [LARGE SCALE GENOMIC DNA]</scope>
    <source>
        <strain>ATCC 14580 / DSM 13 / JCM 2505 / CCUG 7422 / NBRC 12200 / NCIMB 9375 / NCTC 10341 / NRRL NRS-1264 / Gibson 46</strain>
    </source>
</reference>
<gene>
    <name evidence="1" type="primary">glgC</name>
    <name type="ordered locus">BLi03229</name>
    <name type="ordered locus">BL01418</name>
</gene>
<proteinExistence type="inferred from homology"/>